<reference key="1">
    <citation type="journal article" date="2001" name="Nature">
        <title>Genome sequence and gene compaction of the eukaryote parasite Encephalitozoon cuniculi.</title>
        <authorList>
            <person name="Katinka M.D."/>
            <person name="Duprat S."/>
            <person name="Cornillot E."/>
            <person name="Metenier G."/>
            <person name="Thomarat F."/>
            <person name="Prensier G."/>
            <person name="Barbe V."/>
            <person name="Peyretaillade E."/>
            <person name="Brottier P."/>
            <person name="Wincker P."/>
            <person name="Delbac F."/>
            <person name="El Alaoui H."/>
            <person name="Peyret P."/>
            <person name="Saurin W."/>
            <person name="Gouy M."/>
            <person name="Weissenbach J."/>
            <person name="Vivares C.P."/>
        </authorList>
    </citation>
    <scope>NUCLEOTIDE SEQUENCE [LARGE SCALE GENOMIC DNA]</scope>
    <source>
        <strain>GB-M1</strain>
    </source>
</reference>
<reference key="2">
    <citation type="journal article" date="2008" name="Nature">
        <title>Localization and functionality of microsporidian iron-sulphur cluster assembly proteins.</title>
        <authorList>
            <person name="Goldberg A.V."/>
            <person name="Molik S."/>
            <person name="Tsaousis A.D."/>
            <person name="Neumann K."/>
            <person name="Kuhnke G."/>
            <person name="Delbac F."/>
            <person name="Vivares C.P."/>
            <person name="Hirt R.P."/>
            <person name="Lill R."/>
            <person name="Embley T.M."/>
        </authorList>
    </citation>
    <scope>SUBCELLULAR LOCATION</scope>
    <scope>FUNCTION</scope>
</reference>
<proteinExistence type="inferred from homology"/>
<dbReference type="EC" id="2.8.1.7" evidence="4"/>
<dbReference type="EMBL" id="AL590450">
    <property type="protein sequence ID" value="CAD26087.1"/>
    <property type="molecule type" value="Genomic_DNA"/>
</dbReference>
<dbReference type="RefSeq" id="NP_586483.1">
    <property type="nucleotide sequence ID" value="NM_001042316.1"/>
</dbReference>
<dbReference type="SMR" id="Q8SQS2"/>
<dbReference type="FunCoup" id="Q8SQS2">
    <property type="interactions" value="179"/>
</dbReference>
<dbReference type="STRING" id="284813.Q8SQS2"/>
<dbReference type="GeneID" id="860137"/>
<dbReference type="KEGG" id="ecu:ECU11_1770"/>
<dbReference type="VEuPathDB" id="MicrosporidiaDB:ECU11_1770"/>
<dbReference type="HOGENOM" id="CLU_003433_0_2_1"/>
<dbReference type="InParanoid" id="Q8SQS2"/>
<dbReference type="OMA" id="KGLYWAR"/>
<dbReference type="OrthoDB" id="10250117at2759"/>
<dbReference type="Proteomes" id="UP000000819">
    <property type="component" value="Chromosome XI"/>
</dbReference>
<dbReference type="GO" id="GO:1990221">
    <property type="term" value="C:L-cysteine desulfurase complex"/>
    <property type="evidence" value="ECO:0007669"/>
    <property type="project" value="UniProtKB-ARBA"/>
</dbReference>
<dbReference type="GO" id="GO:0005739">
    <property type="term" value="C:mitochondrion"/>
    <property type="evidence" value="ECO:0007669"/>
    <property type="project" value="TreeGrafter"/>
</dbReference>
<dbReference type="GO" id="GO:0032047">
    <property type="term" value="C:mitosome"/>
    <property type="evidence" value="ECO:0007669"/>
    <property type="project" value="UniProtKB-SubCell"/>
</dbReference>
<dbReference type="GO" id="GO:0031071">
    <property type="term" value="F:cysteine desulfurase activity"/>
    <property type="evidence" value="ECO:0007669"/>
    <property type="project" value="UniProtKB-EC"/>
</dbReference>
<dbReference type="GO" id="GO:0051536">
    <property type="term" value="F:iron-sulfur cluster binding"/>
    <property type="evidence" value="ECO:0007669"/>
    <property type="project" value="UniProtKB-KW"/>
</dbReference>
<dbReference type="GO" id="GO:0046872">
    <property type="term" value="F:metal ion binding"/>
    <property type="evidence" value="ECO:0007669"/>
    <property type="project" value="UniProtKB-KW"/>
</dbReference>
<dbReference type="GO" id="GO:0030170">
    <property type="term" value="F:pyridoxal phosphate binding"/>
    <property type="evidence" value="ECO:0007669"/>
    <property type="project" value="InterPro"/>
</dbReference>
<dbReference type="GO" id="GO:0044571">
    <property type="term" value="P:[2Fe-2S] cluster assembly"/>
    <property type="evidence" value="ECO:0007669"/>
    <property type="project" value="InterPro"/>
</dbReference>
<dbReference type="FunFam" id="3.40.640.10:FF:000003">
    <property type="entry name" value="Cysteine desulfurase IscS"/>
    <property type="match status" value="1"/>
</dbReference>
<dbReference type="FunFam" id="3.90.1150.10:FF:000002">
    <property type="entry name" value="Cysteine desulfurase IscS"/>
    <property type="match status" value="1"/>
</dbReference>
<dbReference type="Gene3D" id="3.90.1150.10">
    <property type="entry name" value="Aspartate Aminotransferase, domain 1"/>
    <property type="match status" value="1"/>
</dbReference>
<dbReference type="Gene3D" id="3.40.640.10">
    <property type="entry name" value="Type I PLP-dependent aspartate aminotransferase-like (Major domain)"/>
    <property type="match status" value="1"/>
</dbReference>
<dbReference type="HAMAP" id="MF_00331">
    <property type="entry name" value="Cys_desulf_IscS"/>
    <property type="match status" value="1"/>
</dbReference>
<dbReference type="InterPro" id="IPR000192">
    <property type="entry name" value="Aminotrans_V_dom"/>
</dbReference>
<dbReference type="InterPro" id="IPR020578">
    <property type="entry name" value="Aminotrans_V_PyrdxlP_BS"/>
</dbReference>
<dbReference type="InterPro" id="IPR010240">
    <property type="entry name" value="Cys_deSase_IscS"/>
</dbReference>
<dbReference type="InterPro" id="IPR016454">
    <property type="entry name" value="Cysteine_dSase"/>
</dbReference>
<dbReference type="InterPro" id="IPR015424">
    <property type="entry name" value="PyrdxlP-dep_Trfase"/>
</dbReference>
<dbReference type="InterPro" id="IPR015421">
    <property type="entry name" value="PyrdxlP-dep_Trfase_major"/>
</dbReference>
<dbReference type="InterPro" id="IPR015422">
    <property type="entry name" value="PyrdxlP-dep_Trfase_small"/>
</dbReference>
<dbReference type="NCBIfam" id="NF010611">
    <property type="entry name" value="PRK14012.1"/>
    <property type="match status" value="1"/>
</dbReference>
<dbReference type="PANTHER" id="PTHR11601:SF34">
    <property type="entry name" value="CYSTEINE DESULFURASE"/>
    <property type="match status" value="1"/>
</dbReference>
<dbReference type="PANTHER" id="PTHR11601">
    <property type="entry name" value="CYSTEINE DESULFURYLASE FAMILY MEMBER"/>
    <property type="match status" value="1"/>
</dbReference>
<dbReference type="Pfam" id="PF00266">
    <property type="entry name" value="Aminotran_5"/>
    <property type="match status" value="1"/>
</dbReference>
<dbReference type="PIRSF" id="PIRSF005572">
    <property type="entry name" value="NifS"/>
    <property type="match status" value="1"/>
</dbReference>
<dbReference type="SUPFAM" id="SSF53383">
    <property type="entry name" value="PLP-dependent transferases"/>
    <property type="match status" value="1"/>
</dbReference>
<dbReference type="PROSITE" id="PS00595">
    <property type="entry name" value="AA_TRANSFER_CLASS_5"/>
    <property type="match status" value="1"/>
</dbReference>
<evidence type="ECO:0000250" key="1">
    <source>
        <dbReference type="UniProtKB" id="O29689"/>
    </source>
</evidence>
<evidence type="ECO:0000250" key="2">
    <source>
        <dbReference type="UniProtKB" id="P0A6B7"/>
    </source>
</evidence>
<evidence type="ECO:0000250" key="3">
    <source>
        <dbReference type="UniProtKB" id="P0A6B9"/>
    </source>
</evidence>
<evidence type="ECO:0000250" key="4">
    <source>
        <dbReference type="UniProtKB" id="P25374"/>
    </source>
</evidence>
<evidence type="ECO:0000269" key="5">
    <source>
    </source>
</evidence>
<evidence type="ECO:0000305" key="6"/>
<sequence length="432" mass="47016">MIGGLKSCIEQPSLPKPSTLLPQDKACDTGGKRIFLDVQSTTPVDPRVLDAMLPFYTTVFGNPHSRTHRYGWQAEAAVEKARSQVASLIGCDPKEIIFTSGATESNNLALKGVSGFKLKEGKAAHIITLQTEHKCILDTCRNLEENGVEVTYLPVGNDGVVDIDDVKKSIKENTVLVSIGAVNSEIGTVQPLKEIGMLCKERGVLFHTDAAQGVGKIQIDVNEMNIDLLSMCAHKIYGPKGIGALYVRRRPRVRMVPLINGGGQERGLRSGTVASPLVVGFGKAAEICSKEMKRDFEHIKELSKKLKNMFKKNIEGVIINGSEKGFPGCVNVSFPFVEGESLLMHLKDIALSSGSACTSASLEPSYVLRALGRDDELAHSSIRFGIGRFTMAKEIDIVANKTVEAVQKLREMSPLYEMVKEGIDLSKISWTS</sequence>
<keyword id="KW-0408">Iron</keyword>
<keyword id="KW-0411">Iron-sulfur</keyword>
<keyword id="KW-0479">Metal-binding</keyword>
<keyword id="KW-1025">Mitosome</keyword>
<keyword id="KW-0663">Pyridoxal phosphate</keyword>
<keyword id="KW-1185">Reference proteome</keyword>
<keyword id="KW-0808">Transferase</keyword>
<accession>Q8SQS2</accession>
<organism>
    <name type="scientific">Encephalitozoon cuniculi (strain GB-M1)</name>
    <name type="common">Microsporidian parasite</name>
    <dbReference type="NCBI Taxonomy" id="284813"/>
    <lineage>
        <taxon>Eukaryota</taxon>
        <taxon>Fungi</taxon>
        <taxon>Fungi incertae sedis</taxon>
        <taxon>Microsporidia</taxon>
        <taxon>Unikaryonidae</taxon>
        <taxon>Encephalitozoon</taxon>
    </lineage>
</organism>
<feature type="chain" id="PRO_0000382928" description="Cysteine desulfurase, mitosomal">
    <location>
        <begin position="1"/>
        <end position="432"/>
    </location>
</feature>
<feature type="active site" description="Cysteine persulfide intermediate" evidence="2">
    <location>
        <position position="357"/>
    </location>
</feature>
<feature type="binding site" evidence="3">
    <location>
        <begin position="102"/>
        <end position="103"/>
    </location>
    <ligand>
        <name>pyridoxal 5'-phosphate</name>
        <dbReference type="ChEBI" id="CHEBI:597326"/>
    </ligand>
</feature>
<feature type="binding site" evidence="3">
    <location>
        <position position="212"/>
    </location>
    <ligand>
        <name>pyridoxal 5'-phosphate</name>
        <dbReference type="ChEBI" id="CHEBI:597326"/>
    </ligand>
</feature>
<feature type="binding site" evidence="3">
    <location>
        <begin position="232"/>
        <end position="234"/>
    </location>
    <ligand>
        <name>pyridoxal 5'-phosphate</name>
        <dbReference type="ChEBI" id="CHEBI:597326"/>
    </ligand>
</feature>
<feature type="binding site" evidence="3">
    <location>
        <position position="272"/>
    </location>
    <ligand>
        <name>pyridoxal 5'-phosphate</name>
        <dbReference type="ChEBI" id="CHEBI:597326"/>
    </ligand>
</feature>
<feature type="binding site" description="via persulfide group" evidence="1">
    <location>
        <position position="357"/>
    </location>
    <ligand>
        <name>[2Fe-2S] cluster</name>
        <dbReference type="ChEBI" id="CHEBI:190135"/>
    </ligand>
</feature>
<feature type="modified residue" description="N6-(pyridoxal phosphate)lysine" evidence="3">
    <location>
        <position position="235"/>
    </location>
</feature>
<name>NFS1_ENCCU</name>
<comment type="function">
    <text evidence="5">Catalyzes the removal of elemental sulfur from cysteine to produce alanine. It supplies the inorganic sulfur for iron-sulfur (Fe-S) clusters in mitosomes.</text>
</comment>
<comment type="catalytic activity">
    <reaction evidence="4">
        <text>(sulfur carrier)-H + L-cysteine = (sulfur carrier)-SH + L-alanine</text>
        <dbReference type="Rhea" id="RHEA:43892"/>
        <dbReference type="Rhea" id="RHEA-COMP:14737"/>
        <dbReference type="Rhea" id="RHEA-COMP:14739"/>
        <dbReference type="ChEBI" id="CHEBI:29917"/>
        <dbReference type="ChEBI" id="CHEBI:35235"/>
        <dbReference type="ChEBI" id="CHEBI:57972"/>
        <dbReference type="ChEBI" id="CHEBI:64428"/>
        <dbReference type="EC" id="2.8.1.7"/>
    </reaction>
</comment>
<comment type="cofactor">
    <cofactor evidence="3">
        <name>pyridoxal 5'-phosphate</name>
        <dbReference type="ChEBI" id="CHEBI:597326"/>
    </cofactor>
</comment>
<comment type="subcellular location">
    <subcellularLocation>
        <location evidence="5">Mitosome</location>
    </subcellularLocation>
</comment>
<comment type="similarity">
    <text evidence="6">Belongs to the class-V pyridoxal-phosphate-dependent aminotransferase family. NifS/IscS subfamily.</text>
</comment>
<gene>
    <name evidence="4" type="primary">NFS1</name>
    <name type="ordered locus">ECU11_1770</name>
</gene>
<protein>
    <recommendedName>
        <fullName evidence="4">Cysteine desulfurase, mitosomal</fullName>
        <ecNumber evidence="4">2.8.1.7</ecNumber>
    </recommendedName>
</protein>